<organism>
    <name type="scientific">Rickettsia massiliae (strain Mtu5)</name>
    <dbReference type="NCBI Taxonomy" id="416276"/>
    <lineage>
        <taxon>Bacteria</taxon>
        <taxon>Pseudomonadati</taxon>
        <taxon>Pseudomonadota</taxon>
        <taxon>Alphaproteobacteria</taxon>
        <taxon>Rickettsiales</taxon>
        <taxon>Rickettsiaceae</taxon>
        <taxon>Rickettsieae</taxon>
        <taxon>Rickettsia</taxon>
        <taxon>spotted fever group</taxon>
    </lineage>
</organism>
<evidence type="ECO:0000255" key="1">
    <source>
        <dbReference type="HAMAP-Rule" id="MF_00558"/>
    </source>
</evidence>
<dbReference type="EC" id="6.2.1.5" evidence="1"/>
<dbReference type="EMBL" id="CP000683">
    <property type="protein sequence ID" value="ABV84793.1"/>
    <property type="molecule type" value="Genomic_DNA"/>
</dbReference>
<dbReference type="RefSeq" id="WP_012152768.1">
    <property type="nucleotide sequence ID" value="NC_009900.1"/>
</dbReference>
<dbReference type="SMR" id="A8F1K7"/>
<dbReference type="KEGG" id="rms:RMA_0614"/>
<dbReference type="HOGENOM" id="CLU_037430_0_2_5"/>
<dbReference type="UniPathway" id="UPA00223">
    <property type="reaction ID" value="UER00999"/>
</dbReference>
<dbReference type="Proteomes" id="UP000001311">
    <property type="component" value="Chromosome"/>
</dbReference>
<dbReference type="GO" id="GO:0005829">
    <property type="term" value="C:cytosol"/>
    <property type="evidence" value="ECO:0007669"/>
    <property type="project" value="TreeGrafter"/>
</dbReference>
<dbReference type="GO" id="GO:0042709">
    <property type="term" value="C:succinate-CoA ligase complex"/>
    <property type="evidence" value="ECO:0007669"/>
    <property type="project" value="TreeGrafter"/>
</dbReference>
<dbReference type="GO" id="GO:0005524">
    <property type="term" value="F:ATP binding"/>
    <property type="evidence" value="ECO:0007669"/>
    <property type="project" value="UniProtKB-UniRule"/>
</dbReference>
<dbReference type="GO" id="GO:0000287">
    <property type="term" value="F:magnesium ion binding"/>
    <property type="evidence" value="ECO:0007669"/>
    <property type="project" value="UniProtKB-UniRule"/>
</dbReference>
<dbReference type="GO" id="GO:0004775">
    <property type="term" value="F:succinate-CoA ligase (ADP-forming) activity"/>
    <property type="evidence" value="ECO:0007669"/>
    <property type="project" value="UniProtKB-UniRule"/>
</dbReference>
<dbReference type="GO" id="GO:0004776">
    <property type="term" value="F:succinate-CoA ligase (GDP-forming) activity"/>
    <property type="evidence" value="ECO:0007669"/>
    <property type="project" value="RHEA"/>
</dbReference>
<dbReference type="GO" id="GO:0006104">
    <property type="term" value="P:succinyl-CoA metabolic process"/>
    <property type="evidence" value="ECO:0007669"/>
    <property type="project" value="TreeGrafter"/>
</dbReference>
<dbReference type="GO" id="GO:0006099">
    <property type="term" value="P:tricarboxylic acid cycle"/>
    <property type="evidence" value="ECO:0007669"/>
    <property type="project" value="UniProtKB-UniRule"/>
</dbReference>
<dbReference type="FunFam" id="3.30.1490.20:FF:000002">
    <property type="entry name" value="Succinate--CoA ligase [ADP-forming] subunit beta"/>
    <property type="match status" value="1"/>
</dbReference>
<dbReference type="FunFam" id="3.30.470.20:FF:000002">
    <property type="entry name" value="Succinate--CoA ligase [ADP-forming] subunit beta"/>
    <property type="match status" value="1"/>
</dbReference>
<dbReference type="FunFam" id="3.40.50.261:FF:000001">
    <property type="entry name" value="Succinate--CoA ligase [ADP-forming] subunit beta"/>
    <property type="match status" value="1"/>
</dbReference>
<dbReference type="Gene3D" id="3.30.1490.20">
    <property type="entry name" value="ATP-grasp fold, A domain"/>
    <property type="match status" value="1"/>
</dbReference>
<dbReference type="Gene3D" id="3.30.470.20">
    <property type="entry name" value="ATP-grasp fold, B domain"/>
    <property type="match status" value="1"/>
</dbReference>
<dbReference type="Gene3D" id="3.40.50.261">
    <property type="entry name" value="Succinyl-CoA synthetase domains"/>
    <property type="match status" value="1"/>
</dbReference>
<dbReference type="HAMAP" id="MF_00558">
    <property type="entry name" value="Succ_CoA_beta"/>
    <property type="match status" value="1"/>
</dbReference>
<dbReference type="InterPro" id="IPR011761">
    <property type="entry name" value="ATP-grasp"/>
</dbReference>
<dbReference type="InterPro" id="IPR013650">
    <property type="entry name" value="ATP-grasp_succ-CoA_synth-type"/>
</dbReference>
<dbReference type="InterPro" id="IPR013815">
    <property type="entry name" value="ATP_grasp_subdomain_1"/>
</dbReference>
<dbReference type="InterPro" id="IPR017866">
    <property type="entry name" value="Succ-CoA_synthase_bsu_CS"/>
</dbReference>
<dbReference type="InterPro" id="IPR005811">
    <property type="entry name" value="SUCC_ACL_C"/>
</dbReference>
<dbReference type="InterPro" id="IPR005809">
    <property type="entry name" value="Succ_CoA_ligase-like_bsu"/>
</dbReference>
<dbReference type="InterPro" id="IPR016102">
    <property type="entry name" value="Succinyl-CoA_synth-like"/>
</dbReference>
<dbReference type="NCBIfam" id="NF001913">
    <property type="entry name" value="PRK00696.1"/>
    <property type="match status" value="1"/>
</dbReference>
<dbReference type="NCBIfam" id="TIGR01016">
    <property type="entry name" value="sucCoAbeta"/>
    <property type="match status" value="1"/>
</dbReference>
<dbReference type="PANTHER" id="PTHR11815:SF10">
    <property type="entry name" value="SUCCINATE--COA LIGASE [GDP-FORMING] SUBUNIT BETA, MITOCHONDRIAL"/>
    <property type="match status" value="1"/>
</dbReference>
<dbReference type="PANTHER" id="PTHR11815">
    <property type="entry name" value="SUCCINYL-COA SYNTHETASE BETA CHAIN"/>
    <property type="match status" value="1"/>
</dbReference>
<dbReference type="Pfam" id="PF08442">
    <property type="entry name" value="ATP-grasp_2"/>
    <property type="match status" value="1"/>
</dbReference>
<dbReference type="Pfam" id="PF00549">
    <property type="entry name" value="Ligase_CoA"/>
    <property type="match status" value="1"/>
</dbReference>
<dbReference type="PIRSF" id="PIRSF001554">
    <property type="entry name" value="SucCS_beta"/>
    <property type="match status" value="1"/>
</dbReference>
<dbReference type="SUPFAM" id="SSF56059">
    <property type="entry name" value="Glutathione synthetase ATP-binding domain-like"/>
    <property type="match status" value="1"/>
</dbReference>
<dbReference type="SUPFAM" id="SSF52210">
    <property type="entry name" value="Succinyl-CoA synthetase domains"/>
    <property type="match status" value="1"/>
</dbReference>
<dbReference type="PROSITE" id="PS50975">
    <property type="entry name" value="ATP_GRASP"/>
    <property type="match status" value="1"/>
</dbReference>
<dbReference type="PROSITE" id="PS01217">
    <property type="entry name" value="SUCCINYL_COA_LIG_3"/>
    <property type="match status" value="1"/>
</dbReference>
<accession>A8F1K7</accession>
<reference key="1">
    <citation type="journal article" date="2007" name="Genome Res.">
        <title>Lateral gene transfer between obligate intracellular bacteria: evidence from the Rickettsia massiliae genome.</title>
        <authorList>
            <person name="Blanc G."/>
            <person name="Ogata H."/>
            <person name="Robert C."/>
            <person name="Audic S."/>
            <person name="Claverie J.-M."/>
            <person name="Raoult D."/>
        </authorList>
    </citation>
    <scope>NUCLEOTIDE SEQUENCE [LARGE SCALE GENOMIC DNA]</scope>
    <source>
        <strain>Mtu5</strain>
    </source>
</reference>
<name>SUCC_RICM5</name>
<sequence>MNIHEYQAKEILRKYGVPTSTGLVVTKTEKINDTIDKLNTEVYVVKAQIHAGGRGKAGGVKVVKSKEEAKKVAHDMFGINLVTHQTGPQGQKVNRLYIESGCDILKEYYFSIVFDRSASCITFIASTEGGVDIEEIAEKTPEKIIKFSVDPATGLQDFHMRGIAYELGFKDNQAKQMKEIVKSVYNAFIETDATQIEINPLIVNSDGNLLALDAKITFDDNGLFQHPNITAMRDHDEEDPLETRAANAGLSYVKMDGNIGCMVNGAGLAMATMDIIKLYGASPANFLDVGGGADRERIKEALKIILSDKEVQGILVNIFGGIMRCDIIAEGIIAAAKDIGIKVPLVVRLAGTNVEKGKEILSNSGLEIIPAHDLADAANKIVEAIR</sequence>
<feature type="chain" id="PRO_1000082202" description="Succinate--CoA ligase [ADP-forming] subunit beta">
    <location>
        <begin position="1"/>
        <end position="386"/>
    </location>
</feature>
<feature type="domain" description="ATP-grasp" evidence="1">
    <location>
        <begin position="9"/>
        <end position="244"/>
    </location>
</feature>
<feature type="binding site" evidence="1">
    <location>
        <position position="46"/>
    </location>
    <ligand>
        <name>ATP</name>
        <dbReference type="ChEBI" id="CHEBI:30616"/>
    </ligand>
</feature>
<feature type="binding site" evidence="1">
    <location>
        <begin position="53"/>
        <end position="55"/>
    </location>
    <ligand>
        <name>ATP</name>
        <dbReference type="ChEBI" id="CHEBI:30616"/>
    </ligand>
</feature>
<feature type="binding site" evidence="1">
    <location>
        <position position="99"/>
    </location>
    <ligand>
        <name>ATP</name>
        <dbReference type="ChEBI" id="CHEBI:30616"/>
    </ligand>
</feature>
<feature type="binding site" evidence="1">
    <location>
        <position position="102"/>
    </location>
    <ligand>
        <name>ATP</name>
        <dbReference type="ChEBI" id="CHEBI:30616"/>
    </ligand>
</feature>
<feature type="binding site" evidence="1">
    <location>
        <position position="107"/>
    </location>
    <ligand>
        <name>ATP</name>
        <dbReference type="ChEBI" id="CHEBI:30616"/>
    </ligand>
</feature>
<feature type="binding site" evidence="1">
    <location>
        <position position="199"/>
    </location>
    <ligand>
        <name>Mg(2+)</name>
        <dbReference type="ChEBI" id="CHEBI:18420"/>
    </ligand>
</feature>
<feature type="binding site" evidence="1">
    <location>
        <position position="213"/>
    </location>
    <ligand>
        <name>Mg(2+)</name>
        <dbReference type="ChEBI" id="CHEBI:18420"/>
    </ligand>
</feature>
<feature type="binding site" evidence="1">
    <location>
        <position position="264"/>
    </location>
    <ligand>
        <name>substrate</name>
        <note>ligand shared with subunit alpha</note>
    </ligand>
</feature>
<feature type="binding site" evidence="1">
    <location>
        <begin position="321"/>
        <end position="323"/>
    </location>
    <ligand>
        <name>substrate</name>
        <note>ligand shared with subunit alpha</note>
    </ligand>
</feature>
<comment type="function">
    <text evidence="1">Succinyl-CoA synthetase functions in the citric acid cycle (TCA), coupling the hydrolysis of succinyl-CoA to the synthesis of either ATP or GTP and thus represents the only step of substrate-level phosphorylation in the TCA. The beta subunit provides nucleotide specificity of the enzyme and binds the substrate succinate, while the binding sites for coenzyme A and phosphate are found in the alpha subunit.</text>
</comment>
<comment type="catalytic activity">
    <reaction evidence="1">
        <text>succinate + ATP + CoA = succinyl-CoA + ADP + phosphate</text>
        <dbReference type="Rhea" id="RHEA:17661"/>
        <dbReference type="ChEBI" id="CHEBI:30031"/>
        <dbReference type="ChEBI" id="CHEBI:30616"/>
        <dbReference type="ChEBI" id="CHEBI:43474"/>
        <dbReference type="ChEBI" id="CHEBI:57287"/>
        <dbReference type="ChEBI" id="CHEBI:57292"/>
        <dbReference type="ChEBI" id="CHEBI:456216"/>
        <dbReference type="EC" id="6.2.1.5"/>
    </reaction>
    <physiologicalReaction direction="right-to-left" evidence="1">
        <dbReference type="Rhea" id="RHEA:17663"/>
    </physiologicalReaction>
</comment>
<comment type="catalytic activity">
    <reaction evidence="1">
        <text>GTP + succinate + CoA = succinyl-CoA + GDP + phosphate</text>
        <dbReference type="Rhea" id="RHEA:22120"/>
        <dbReference type="ChEBI" id="CHEBI:30031"/>
        <dbReference type="ChEBI" id="CHEBI:37565"/>
        <dbReference type="ChEBI" id="CHEBI:43474"/>
        <dbReference type="ChEBI" id="CHEBI:57287"/>
        <dbReference type="ChEBI" id="CHEBI:57292"/>
        <dbReference type="ChEBI" id="CHEBI:58189"/>
    </reaction>
    <physiologicalReaction direction="right-to-left" evidence="1">
        <dbReference type="Rhea" id="RHEA:22122"/>
    </physiologicalReaction>
</comment>
<comment type="cofactor">
    <cofactor evidence="1">
        <name>Mg(2+)</name>
        <dbReference type="ChEBI" id="CHEBI:18420"/>
    </cofactor>
    <text evidence="1">Binds 1 Mg(2+) ion per subunit.</text>
</comment>
<comment type="pathway">
    <text evidence="1">Carbohydrate metabolism; tricarboxylic acid cycle; succinate from succinyl-CoA (ligase route): step 1/1.</text>
</comment>
<comment type="subunit">
    <text evidence="1">Heterotetramer of two alpha and two beta subunits.</text>
</comment>
<comment type="similarity">
    <text evidence="1">Belongs to the succinate/malate CoA ligase beta subunit family.</text>
</comment>
<protein>
    <recommendedName>
        <fullName evidence="1">Succinate--CoA ligase [ADP-forming] subunit beta</fullName>
        <ecNumber evidence="1">6.2.1.5</ecNumber>
    </recommendedName>
    <alternativeName>
        <fullName evidence="1">Succinyl-CoA synthetase subunit beta</fullName>
        <shortName evidence="1">SCS-beta</shortName>
    </alternativeName>
</protein>
<proteinExistence type="inferred from homology"/>
<keyword id="KW-0067">ATP-binding</keyword>
<keyword id="KW-0436">Ligase</keyword>
<keyword id="KW-0460">Magnesium</keyword>
<keyword id="KW-0479">Metal-binding</keyword>
<keyword id="KW-0547">Nucleotide-binding</keyword>
<keyword id="KW-0816">Tricarboxylic acid cycle</keyword>
<gene>
    <name evidence="1" type="primary">sucC</name>
    <name type="ordered locus">RMA_0614</name>
</gene>